<keyword id="KW-0066">ATP synthesis</keyword>
<keyword id="KW-0067">ATP-binding</keyword>
<keyword id="KW-0997">Cell inner membrane</keyword>
<keyword id="KW-1003">Cell membrane</keyword>
<keyword id="KW-0139">CF(1)</keyword>
<keyword id="KW-0375">Hydrogen ion transport</keyword>
<keyword id="KW-0406">Ion transport</keyword>
<keyword id="KW-0472">Membrane</keyword>
<keyword id="KW-0547">Nucleotide-binding</keyword>
<keyword id="KW-1278">Translocase</keyword>
<keyword id="KW-0813">Transport</keyword>
<feature type="chain" id="PRO_1000166614" description="ATP synthase subunit beta">
    <location>
        <begin position="1"/>
        <end position="475"/>
    </location>
</feature>
<feature type="binding site" evidence="1">
    <location>
        <begin position="152"/>
        <end position="159"/>
    </location>
    <ligand>
        <name>ATP</name>
        <dbReference type="ChEBI" id="CHEBI:30616"/>
    </ligand>
</feature>
<dbReference type="EC" id="7.1.2.2" evidence="1"/>
<dbReference type="EMBL" id="CP001391">
    <property type="protein sequence ID" value="ACN95028.1"/>
    <property type="molecule type" value="Genomic_DNA"/>
</dbReference>
<dbReference type="RefSeq" id="WP_012673086.1">
    <property type="nucleotide sequence ID" value="NZ_MKIF01000133.1"/>
</dbReference>
<dbReference type="SMR" id="C0R5I6"/>
<dbReference type="STRING" id="66084.WRi_001920"/>
<dbReference type="KEGG" id="wri:WRi_001920"/>
<dbReference type="HOGENOM" id="CLU_022398_0_2_5"/>
<dbReference type="Proteomes" id="UP000001293">
    <property type="component" value="Chromosome"/>
</dbReference>
<dbReference type="GO" id="GO:0005886">
    <property type="term" value="C:plasma membrane"/>
    <property type="evidence" value="ECO:0007669"/>
    <property type="project" value="UniProtKB-SubCell"/>
</dbReference>
<dbReference type="GO" id="GO:0045259">
    <property type="term" value="C:proton-transporting ATP synthase complex"/>
    <property type="evidence" value="ECO:0007669"/>
    <property type="project" value="UniProtKB-KW"/>
</dbReference>
<dbReference type="GO" id="GO:0005524">
    <property type="term" value="F:ATP binding"/>
    <property type="evidence" value="ECO:0007669"/>
    <property type="project" value="UniProtKB-UniRule"/>
</dbReference>
<dbReference type="GO" id="GO:0016887">
    <property type="term" value="F:ATP hydrolysis activity"/>
    <property type="evidence" value="ECO:0007669"/>
    <property type="project" value="InterPro"/>
</dbReference>
<dbReference type="GO" id="GO:0046933">
    <property type="term" value="F:proton-transporting ATP synthase activity, rotational mechanism"/>
    <property type="evidence" value="ECO:0007669"/>
    <property type="project" value="UniProtKB-UniRule"/>
</dbReference>
<dbReference type="CDD" id="cd18110">
    <property type="entry name" value="ATP-synt_F1_beta_C"/>
    <property type="match status" value="1"/>
</dbReference>
<dbReference type="CDD" id="cd18115">
    <property type="entry name" value="ATP-synt_F1_beta_N"/>
    <property type="match status" value="1"/>
</dbReference>
<dbReference type="CDD" id="cd01133">
    <property type="entry name" value="F1-ATPase_beta_CD"/>
    <property type="match status" value="1"/>
</dbReference>
<dbReference type="FunFam" id="1.10.1140.10:FF:000001">
    <property type="entry name" value="ATP synthase subunit beta"/>
    <property type="match status" value="1"/>
</dbReference>
<dbReference type="FunFam" id="3.40.50.300:FF:000026">
    <property type="entry name" value="ATP synthase subunit beta"/>
    <property type="match status" value="1"/>
</dbReference>
<dbReference type="Gene3D" id="2.40.10.170">
    <property type="match status" value="1"/>
</dbReference>
<dbReference type="Gene3D" id="1.10.1140.10">
    <property type="entry name" value="Bovine Mitochondrial F1-atpase, Atp Synthase Beta Chain, Chain D, domain 3"/>
    <property type="match status" value="1"/>
</dbReference>
<dbReference type="Gene3D" id="3.40.50.300">
    <property type="entry name" value="P-loop containing nucleotide triphosphate hydrolases"/>
    <property type="match status" value="1"/>
</dbReference>
<dbReference type="HAMAP" id="MF_01347">
    <property type="entry name" value="ATP_synth_beta_bact"/>
    <property type="match status" value="1"/>
</dbReference>
<dbReference type="InterPro" id="IPR003593">
    <property type="entry name" value="AAA+_ATPase"/>
</dbReference>
<dbReference type="InterPro" id="IPR055190">
    <property type="entry name" value="ATP-synt_VA_C"/>
</dbReference>
<dbReference type="InterPro" id="IPR005722">
    <property type="entry name" value="ATP_synth_F1_bsu"/>
</dbReference>
<dbReference type="InterPro" id="IPR020003">
    <property type="entry name" value="ATPase_a/bsu_AS"/>
</dbReference>
<dbReference type="InterPro" id="IPR050053">
    <property type="entry name" value="ATPase_alpha/beta_chains"/>
</dbReference>
<dbReference type="InterPro" id="IPR004100">
    <property type="entry name" value="ATPase_F1/V1/A1_a/bsu_N"/>
</dbReference>
<dbReference type="InterPro" id="IPR036121">
    <property type="entry name" value="ATPase_F1/V1/A1_a/bsu_N_sf"/>
</dbReference>
<dbReference type="InterPro" id="IPR000194">
    <property type="entry name" value="ATPase_F1/V1/A1_a/bsu_nucl-bd"/>
</dbReference>
<dbReference type="InterPro" id="IPR024034">
    <property type="entry name" value="ATPase_F1/V1_b/a_C"/>
</dbReference>
<dbReference type="InterPro" id="IPR027417">
    <property type="entry name" value="P-loop_NTPase"/>
</dbReference>
<dbReference type="NCBIfam" id="TIGR01039">
    <property type="entry name" value="atpD"/>
    <property type="match status" value="1"/>
</dbReference>
<dbReference type="PANTHER" id="PTHR15184">
    <property type="entry name" value="ATP SYNTHASE"/>
    <property type="match status" value="1"/>
</dbReference>
<dbReference type="PANTHER" id="PTHR15184:SF71">
    <property type="entry name" value="ATP SYNTHASE SUBUNIT BETA, MITOCHONDRIAL"/>
    <property type="match status" value="1"/>
</dbReference>
<dbReference type="Pfam" id="PF00006">
    <property type="entry name" value="ATP-synt_ab"/>
    <property type="match status" value="1"/>
</dbReference>
<dbReference type="Pfam" id="PF02874">
    <property type="entry name" value="ATP-synt_ab_N"/>
    <property type="match status" value="1"/>
</dbReference>
<dbReference type="Pfam" id="PF22919">
    <property type="entry name" value="ATP-synt_VA_C"/>
    <property type="match status" value="1"/>
</dbReference>
<dbReference type="PIRSF" id="PIRSF039072">
    <property type="entry name" value="ATPase_subunit_beta"/>
    <property type="match status" value="1"/>
</dbReference>
<dbReference type="SMART" id="SM00382">
    <property type="entry name" value="AAA"/>
    <property type="match status" value="1"/>
</dbReference>
<dbReference type="SUPFAM" id="SSF47917">
    <property type="entry name" value="C-terminal domain of alpha and beta subunits of F1 ATP synthase"/>
    <property type="match status" value="1"/>
</dbReference>
<dbReference type="SUPFAM" id="SSF50615">
    <property type="entry name" value="N-terminal domain of alpha and beta subunits of F1 ATP synthase"/>
    <property type="match status" value="1"/>
</dbReference>
<dbReference type="SUPFAM" id="SSF52540">
    <property type="entry name" value="P-loop containing nucleoside triphosphate hydrolases"/>
    <property type="match status" value="1"/>
</dbReference>
<dbReference type="PROSITE" id="PS00152">
    <property type="entry name" value="ATPASE_ALPHA_BETA"/>
    <property type="match status" value="1"/>
</dbReference>
<comment type="function">
    <text evidence="1">Produces ATP from ADP in the presence of a proton gradient across the membrane. The catalytic sites are hosted primarily by the beta subunits.</text>
</comment>
<comment type="catalytic activity">
    <reaction evidence="1">
        <text>ATP + H2O + 4 H(+)(in) = ADP + phosphate + 5 H(+)(out)</text>
        <dbReference type="Rhea" id="RHEA:57720"/>
        <dbReference type="ChEBI" id="CHEBI:15377"/>
        <dbReference type="ChEBI" id="CHEBI:15378"/>
        <dbReference type="ChEBI" id="CHEBI:30616"/>
        <dbReference type="ChEBI" id="CHEBI:43474"/>
        <dbReference type="ChEBI" id="CHEBI:456216"/>
        <dbReference type="EC" id="7.1.2.2"/>
    </reaction>
</comment>
<comment type="subunit">
    <text evidence="1">F-type ATPases have 2 components, CF(1) - the catalytic core - and CF(0) - the membrane proton channel. CF(1) has five subunits: alpha(3), beta(3), gamma(1), delta(1), epsilon(1). CF(0) has three main subunits: a(1), b(2) and c(9-12). The alpha and beta chains form an alternating ring which encloses part of the gamma chain. CF(1) is attached to CF(0) by a central stalk formed by the gamma and epsilon chains, while a peripheral stalk is formed by the delta and b chains.</text>
</comment>
<comment type="subcellular location">
    <subcellularLocation>
        <location evidence="1">Cell inner membrane</location>
        <topology evidence="1">Peripheral membrane protein</topology>
    </subcellularLocation>
</comment>
<comment type="similarity">
    <text evidence="1">Belongs to the ATPase alpha/beta chains family.</text>
</comment>
<proteinExistence type="inferred from homology"/>
<reference key="1">
    <citation type="journal article" date="2009" name="Proc. Natl. Acad. Sci. U.S.A.">
        <title>The mosaic genome structure of the Wolbachia wRi strain infecting Drosophila simulans.</title>
        <authorList>
            <person name="Klasson L."/>
            <person name="Westberg J."/>
            <person name="Sapountzis P."/>
            <person name="Naeslund K."/>
            <person name="Lutnaes Y."/>
            <person name="Darby A.C."/>
            <person name="Veneti Z."/>
            <person name="Chen L."/>
            <person name="Braig H.R."/>
            <person name="Garrett R."/>
            <person name="Bourtzis K."/>
            <person name="Andersson S.G."/>
        </authorList>
    </citation>
    <scope>NUCLEOTIDE SEQUENCE [LARGE SCALE GENOMIC DNA]</scope>
    <source>
        <strain>wRi</strain>
    </source>
</reference>
<accession>C0R5I6</accession>
<organism>
    <name type="scientific">Wolbachia sp. subsp. Drosophila simulans (strain wRi)</name>
    <dbReference type="NCBI Taxonomy" id="66084"/>
    <lineage>
        <taxon>Bacteria</taxon>
        <taxon>Pseudomonadati</taxon>
        <taxon>Pseudomonadota</taxon>
        <taxon>Alphaproteobacteria</taxon>
        <taxon>Rickettsiales</taxon>
        <taxon>Anaplasmataceae</taxon>
        <taxon>Wolbachieae</taxon>
        <taxon>Wolbachia</taxon>
    </lineage>
</organism>
<protein>
    <recommendedName>
        <fullName evidence="1">ATP synthase subunit beta</fullName>
        <ecNumber evidence="1">7.1.2.2</ecNumber>
    </recommendedName>
    <alternativeName>
        <fullName evidence="1">ATP synthase F1 sector subunit beta</fullName>
    </alternativeName>
    <alternativeName>
        <fullName evidence="1">F-ATPase subunit beta</fullName>
    </alternativeName>
</protein>
<name>ATPB_WOLWR</name>
<evidence type="ECO:0000255" key="1">
    <source>
        <dbReference type="HAMAP-Rule" id="MF_01347"/>
    </source>
</evidence>
<sequence>MNIGRAIKVTQAVVDIKFEGELPKIFNALKSKLKYKDKELVLEVSQHIGDNIVRCIAMDSTDGMSRGDEFVDTGAPISVPIGRSTLGRIFNVVGELIDECGPLKGKYNLEPIHRAPPSFTEQRIQEEVLVTGIKVIDLLAPYLKGGKIGLFGGAGVGKTVLIMELINNIAKAHKGFSVFAGVGERTREGNDLYHEMITSNVININEHEKSQAVLVYGQMNEPPGARARVALTALTMAEYFRDRENQDVLFFVDNIFRFTQAGSEISALLGRIPSAVGYQPTLATDMGAMQERIASTTSGSITSVQAIYVPADDLTDPAPATTFSHLDATTVLSRQIAEMGIYPAVDPLDSTSQSLSAEIIGEEHYKVASEVKRILQTYKSLQDIIAILGMDELSDEDKIIVDRARKIQKFLSQPFHVAEIFTGMPGKFVSLSDTVSSFKGIVEGKYDHLPEAAFYMVGNIDEAIKKAELIQAEAK</sequence>
<gene>
    <name evidence="1" type="primary">atpD</name>
    <name type="ordered locus">WRi_001920</name>
</gene>